<reference key="1">
    <citation type="journal article" date="2006" name="J. Bacteriol.">
        <title>The genome sequence of Methanosphaera stadtmanae reveals why this human intestinal archaeon is restricted to methanol and H2 for methane formation and ATP synthesis.</title>
        <authorList>
            <person name="Fricke W.F."/>
            <person name="Seedorf H."/>
            <person name="Henne A."/>
            <person name="Kruer M."/>
            <person name="Liesegang H."/>
            <person name="Hedderich R."/>
            <person name="Gottschalk G."/>
            <person name="Thauer R.K."/>
        </authorList>
    </citation>
    <scope>NUCLEOTIDE SEQUENCE [LARGE SCALE GENOMIC DNA]</scope>
    <source>
        <strain>ATCC 43021 / DSM 3091 / JCM 11832 / MCB-3</strain>
    </source>
</reference>
<proteinExistence type="inferred from homology"/>
<name>HEM1_METST</name>
<gene>
    <name evidence="1" type="primary">hemA</name>
    <name type="ordered locus">Msp_1408</name>
</gene>
<comment type="function">
    <text evidence="1">Catalyzes the NADPH-dependent reduction of glutamyl-tRNA(Glu) to glutamate 1-semialdehyde (GSA).</text>
</comment>
<comment type="catalytic activity">
    <reaction evidence="1">
        <text>(S)-4-amino-5-oxopentanoate + tRNA(Glu) + NADP(+) = L-glutamyl-tRNA(Glu) + NADPH + H(+)</text>
        <dbReference type="Rhea" id="RHEA:12344"/>
        <dbReference type="Rhea" id="RHEA-COMP:9663"/>
        <dbReference type="Rhea" id="RHEA-COMP:9680"/>
        <dbReference type="ChEBI" id="CHEBI:15378"/>
        <dbReference type="ChEBI" id="CHEBI:57501"/>
        <dbReference type="ChEBI" id="CHEBI:57783"/>
        <dbReference type="ChEBI" id="CHEBI:58349"/>
        <dbReference type="ChEBI" id="CHEBI:78442"/>
        <dbReference type="ChEBI" id="CHEBI:78520"/>
        <dbReference type="EC" id="1.2.1.70"/>
    </reaction>
</comment>
<comment type="pathway">
    <text evidence="1">Porphyrin-containing compound metabolism; protoporphyrin-IX biosynthesis; 5-aminolevulinate from L-glutamyl-tRNA(Glu): step 1/2.</text>
</comment>
<comment type="subunit">
    <text evidence="1">Homodimer.</text>
</comment>
<comment type="domain">
    <text evidence="1">Possesses an unusual extended V-shaped dimeric structure with each monomer consisting of three distinct domains arranged along a curved 'spinal' alpha-helix. The N-terminal catalytic domain specifically recognizes the glutamate moiety of the substrate. The second domain is the NADPH-binding domain, and the third C-terminal domain is responsible for dimerization.</text>
</comment>
<comment type="miscellaneous">
    <text evidence="1">During catalysis, the active site Cys acts as a nucleophile attacking the alpha-carbonyl group of tRNA-bound glutamate with the formation of a thioester intermediate between enzyme and glutamate, and the concomitant release of tRNA(Glu). The thioester intermediate is finally reduced by direct hydride transfer from NADPH, to form the product GSA.</text>
</comment>
<comment type="similarity">
    <text evidence="1">Belongs to the glutamyl-tRNA reductase family.</text>
</comment>
<feature type="chain" id="PRO_1000004643" description="Glutamyl-tRNA reductase">
    <location>
        <begin position="1"/>
        <end position="395"/>
    </location>
</feature>
<feature type="active site" description="Nucleophile" evidence="1">
    <location>
        <position position="46"/>
    </location>
</feature>
<feature type="binding site" evidence="1">
    <location>
        <begin position="45"/>
        <end position="48"/>
    </location>
    <ligand>
        <name>substrate</name>
    </ligand>
</feature>
<feature type="binding site" evidence="1">
    <location>
        <position position="87"/>
    </location>
    <ligand>
        <name>substrate</name>
    </ligand>
</feature>
<feature type="binding site" evidence="1">
    <location>
        <begin position="92"/>
        <end position="94"/>
    </location>
    <ligand>
        <name>substrate</name>
    </ligand>
</feature>
<feature type="binding site" evidence="1">
    <location>
        <position position="98"/>
    </location>
    <ligand>
        <name>substrate</name>
    </ligand>
</feature>
<feature type="binding site" evidence="1">
    <location>
        <begin position="167"/>
        <end position="172"/>
    </location>
    <ligand>
        <name>NADP(+)</name>
        <dbReference type="ChEBI" id="CHEBI:58349"/>
    </ligand>
</feature>
<feature type="site" description="Important for activity" evidence="1">
    <location>
        <position position="77"/>
    </location>
</feature>
<evidence type="ECO:0000255" key="1">
    <source>
        <dbReference type="HAMAP-Rule" id="MF_00087"/>
    </source>
</evidence>
<protein>
    <recommendedName>
        <fullName evidence="1">Glutamyl-tRNA reductase</fullName>
        <shortName evidence="1">GluTR</shortName>
        <ecNumber evidence="1">1.2.1.70</ecNumber>
    </recommendedName>
</protein>
<accession>Q2NEH4</accession>
<organism>
    <name type="scientific">Methanosphaera stadtmanae (strain ATCC 43021 / DSM 3091 / JCM 11832 / MCB-3)</name>
    <dbReference type="NCBI Taxonomy" id="339860"/>
    <lineage>
        <taxon>Archaea</taxon>
        <taxon>Methanobacteriati</taxon>
        <taxon>Methanobacteriota</taxon>
        <taxon>Methanomada group</taxon>
        <taxon>Methanobacteria</taxon>
        <taxon>Methanobacteriales</taxon>
        <taxon>Methanobacteriaceae</taxon>
        <taxon>Methanosphaera</taxon>
    </lineage>
</organism>
<dbReference type="EC" id="1.2.1.70" evidence="1"/>
<dbReference type="EMBL" id="CP000102">
    <property type="protein sequence ID" value="ABC57779.1"/>
    <property type="molecule type" value="Genomic_DNA"/>
</dbReference>
<dbReference type="RefSeq" id="WP_011406978.1">
    <property type="nucleotide sequence ID" value="NC_007681.1"/>
</dbReference>
<dbReference type="SMR" id="Q2NEH4"/>
<dbReference type="STRING" id="339860.Msp_1408"/>
<dbReference type="GeneID" id="41325981"/>
<dbReference type="KEGG" id="mst:Msp_1408"/>
<dbReference type="eggNOG" id="arCOG01036">
    <property type="taxonomic scope" value="Archaea"/>
</dbReference>
<dbReference type="HOGENOM" id="CLU_035113_0_0_2"/>
<dbReference type="OrthoDB" id="4562at2157"/>
<dbReference type="UniPathway" id="UPA00251">
    <property type="reaction ID" value="UER00316"/>
</dbReference>
<dbReference type="Proteomes" id="UP000001931">
    <property type="component" value="Chromosome"/>
</dbReference>
<dbReference type="GO" id="GO:0008883">
    <property type="term" value="F:glutamyl-tRNA reductase activity"/>
    <property type="evidence" value="ECO:0007669"/>
    <property type="project" value="UniProtKB-UniRule"/>
</dbReference>
<dbReference type="GO" id="GO:0050661">
    <property type="term" value="F:NADP binding"/>
    <property type="evidence" value="ECO:0007669"/>
    <property type="project" value="InterPro"/>
</dbReference>
<dbReference type="GO" id="GO:0019353">
    <property type="term" value="P:protoporphyrinogen IX biosynthetic process from glutamate"/>
    <property type="evidence" value="ECO:0007669"/>
    <property type="project" value="TreeGrafter"/>
</dbReference>
<dbReference type="CDD" id="cd05213">
    <property type="entry name" value="NAD_bind_Glutamyl_tRNA_reduct"/>
    <property type="match status" value="1"/>
</dbReference>
<dbReference type="FunFam" id="3.40.50.720:FF:000031">
    <property type="entry name" value="Glutamyl-tRNA reductase"/>
    <property type="match status" value="1"/>
</dbReference>
<dbReference type="Gene3D" id="3.30.460.30">
    <property type="entry name" value="Glutamyl-tRNA reductase, N-terminal domain"/>
    <property type="match status" value="1"/>
</dbReference>
<dbReference type="Gene3D" id="3.40.50.720">
    <property type="entry name" value="NAD(P)-binding Rossmann-like Domain"/>
    <property type="match status" value="1"/>
</dbReference>
<dbReference type="HAMAP" id="MF_00087">
    <property type="entry name" value="Glu_tRNA_reductase"/>
    <property type="match status" value="1"/>
</dbReference>
<dbReference type="InterPro" id="IPR000343">
    <property type="entry name" value="4pyrrol_synth_GluRdtase"/>
</dbReference>
<dbReference type="InterPro" id="IPR015896">
    <property type="entry name" value="4pyrrol_synth_GluRdtase_dimer"/>
</dbReference>
<dbReference type="InterPro" id="IPR015895">
    <property type="entry name" value="4pyrrol_synth_GluRdtase_N"/>
</dbReference>
<dbReference type="InterPro" id="IPR018214">
    <property type="entry name" value="GluRdtase_CS"/>
</dbReference>
<dbReference type="InterPro" id="IPR036453">
    <property type="entry name" value="GluRdtase_dimer_dom_sf"/>
</dbReference>
<dbReference type="InterPro" id="IPR036343">
    <property type="entry name" value="GluRdtase_N_sf"/>
</dbReference>
<dbReference type="InterPro" id="IPR036291">
    <property type="entry name" value="NAD(P)-bd_dom_sf"/>
</dbReference>
<dbReference type="InterPro" id="IPR006151">
    <property type="entry name" value="Shikm_DH/Glu-tRNA_Rdtase"/>
</dbReference>
<dbReference type="NCBIfam" id="TIGR01035">
    <property type="entry name" value="hemA"/>
    <property type="match status" value="1"/>
</dbReference>
<dbReference type="PANTHER" id="PTHR43013">
    <property type="entry name" value="GLUTAMYL-TRNA REDUCTASE"/>
    <property type="match status" value="1"/>
</dbReference>
<dbReference type="PANTHER" id="PTHR43013:SF1">
    <property type="entry name" value="GLUTAMYL-TRNA REDUCTASE"/>
    <property type="match status" value="1"/>
</dbReference>
<dbReference type="Pfam" id="PF00745">
    <property type="entry name" value="GlutR_dimer"/>
    <property type="match status" value="1"/>
</dbReference>
<dbReference type="Pfam" id="PF05201">
    <property type="entry name" value="GlutR_N"/>
    <property type="match status" value="1"/>
</dbReference>
<dbReference type="Pfam" id="PF01488">
    <property type="entry name" value="Shikimate_DH"/>
    <property type="match status" value="1"/>
</dbReference>
<dbReference type="PIRSF" id="PIRSF000445">
    <property type="entry name" value="4pyrrol_synth_GluRdtase"/>
    <property type="match status" value="1"/>
</dbReference>
<dbReference type="SUPFAM" id="SSF69742">
    <property type="entry name" value="Glutamyl tRNA-reductase catalytic, N-terminal domain"/>
    <property type="match status" value="1"/>
</dbReference>
<dbReference type="SUPFAM" id="SSF69075">
    <property type="entry name" value="Glutamyl tRNA-reductase dimerization domain"/>
    <property type="match status" value="1"/>
</dbReference>
<dbReference type="SUPFAM" id="SSF51735">
    <property type="entry name" value="NAD(P)-binding Rossmann-fold domains"/>
    <property type="match status" value="1"/>
</dbReference>
<dbReference type="PROSITE" id="PS00747">
    <property type="entry name" value="GLUTR"/>
    <property type="match status" value="1"/>
</dbReference>
<keyword id="KW-0521">NADP</keyword>
<keyword id="KW-0560">Oxidoreductase</keyword>
<keyword id="KW-0627">Porphyrin biosynthesis</keyword>
<keyword id="KW-1185">Reference proteome</keyword>
<sequence>MLVNIRIDFKIADIETMEKSYAKLDMINAELHEKLDILEEVTLKTCNRYEIYLLIDEEVNIPTTTFIVEKNDMAINHLLRLASGLESMIMGEDQILGQIKTARKNAIKNKTIGPKLEKVFTKAIHVGQTIRKNTHINEGGVSVGSGAVELIEEKYGSLKGKNVLIIGAGEMGTVVSKALLEKETNTIVVANRTYDKARQLAQELDGEAIKFDEMNNELVNIDIVISSTGAPHSIISKERIAFLPEEHLHDMIMLDLANPHDIENDVQELGVKLYNLDDLRYVTDKNKERRNKEAIKAEAIIEDETLLLKESLKQMEITPILSSLNIEAEKIRKQELDKTLHMLDLDKKSSKKVDYLTRSITDKLLYNIINNLKEAAANNDKDTIRNAKKILLEYN</sequence>